<name>TNP5_ECOLX</name>
<protein>
    <recommendedName>
        <fullName>Transposase for transposon Tn2501</fullName>
    </recommendedName>
</protein>
<evidence type="ECO:0000305" key="1"/>
<reference key="1">
    <citation type="journal article" date="1987" name="Nucleic Acids Res.">
        <title>DNA sequence of the transposase gene of the new category of class II transposon, Tn2501.</title>
        <authorList>
            <person name="Turner A.K."/>
            <person name="Grinsted J."/>
        </authorList>
    </citation>
    <scope>NUCLEOTIDE SEQUENCE [GENOMIC DNA]</scope>
</reference>
<reference key="2">
    <citation type="journal article" date="1987" name="J. Bacteriol.">
        <title>Tn2501, a component of the lactose transposon Tn951, is an example of a new category of class II transposable elements.</title>
        <authorList>
            <person name="Michiels T."/>
            <person name="Cornelis G."/>
            <person name="Ellis K."/>
            <person name="Grinsted J."/>
        </authorList>
    </citation>
    <scope>NUCLEOTIDE SEQUENCE [GENOMIC DNA] OF 1-204</scope>
</reference>
<organism>
    <name type="scientific">Escherichia coli</name>
    <dbReference type="NCBI Taxonomy" id="562"/>
    <lineage>
        <taxon>Bacteria</taxon>
        <taxon>Pseudomonadati</taxon>
        <taxon>Pseudomonadota</taxon>
        <taxon>Gammaproteobacteria</taxon>
        <taxon>Enterobacterales</taxon>
        <taxon>Enterobacteriaceae</taxon>
        <taxon>Escherichia</taxon>
    </lineage>
</organism>
<comment type="function">
    <text>Required for transposition of transposon Tn2501.</text>
</comment>
<comment type="similarity">
    <text evidence="1">Belongs to the transposase 7 family.</text>
</comment>
<sequence length="994" mass="112750">MPRRQILSSEEQERLLVIPDDEIILTRMCFLNEQDIALINKHRRPANRLGFAVLLCYLRGPGFIPDKSNVPHSSVISRIASRLKLQPDLWPEYASREQTRWEHLTELYRYLKLSPFSRSLQKDCIRHLHPYAMRTDKGFMLAEEMLNWLHSNNVIFPSVDVIERTLAEAVTLADRAVFSALTAQLEKQHKSALDSLLKSEGEQASRLAWLLQPPGKINGKNVLQHIDRLNSIAALGLPDGITLSIHQNRLLKLAREGRKMSSRDLAKFTDVRRYATLVCVIQEAQATLTDEVIELHERILGTLFSRAKRTQAERLQLTGKLIQSKLKQYVTVGQALLHARESGEDPWAAIEDVLPWQEFINSLEETQFLSRKGNFDPLHLITEKYSTLRKYAPRMLSALQFIATPPAQTLSDALDTIRDMYRKQLRKVPPAAPTGFIPESWRKLVLTPSGIDRKYYEFCVMNELKGALRSGDIWVKGSRRYRNFDDYLIPAAEFEKSRHNDQLQLAVQTDCRAYLQARMTLLASRLEEVNAMALAGDLPDVDISDKGVKITPLENSVPSGASPFADLVYGMLPHPKITEILEEVDNWTGFTRHFAHLKNNNVRPKDGRLLLTTILADGINLGLTKMAESCPGATKSSLEGIQAWYIRDETYSAALAELVNAQKARPLAAFWGDGTTSSSDGQNFRVGSHGRYAGQVNLKYGQEPGVQIYTHISDQYSPFYAKVISRVRDSTHVLDGLLYHESDLEITEHYTDTAGFTEHVFALMHLLGFAFAPRIRDLHDKRLFIHGKAERYPGLQSVISTTSLNIKDIEAHWDEILRLAASIKQGTVTASLMIKKLASYPKQNGLAKALREIGRIERTLFMLDWFRDPGLRRRVQAGLNKGEARNALARAVFMHRLGEIRDRGLENQSYRASGLTLLTAAITLWNTVYIERAIESLKRKGIPINNQLVSHLSPLGWEHINLSGDYVWRNNIKLGSGKYRSLRTVDTELYKKQS</sequence>
<feature type="chain" id="PRO_0000075429" description="Transposase for transposon Tn2501">
    <location>
        <begin position="1"/>
        <end position="994"/>
    </location>
</feature>
<gene>
    <name type="primary">tnpA</name>
</gene>
<dbReference type="EMBL" id="M15197">
    <property type="protein sequence ID" value="AAA27425.2"/>
    <property type="molecule type" value="Genomic_DNA"/>
</dbReference>
<dbReference type="EMBL" id="Y00502">
    <property type="protein sequence ID" value="CAA68555.1"/>
    <property type="molecule type" value="Genomic_DNA"/>
</dbReference>
<dbReference type="PIR" id="S06302">
    <property type="entry name" value="TQECT5"/>
</dbReference>
<dbReference type="SMR" id="P08504"/>
<dbReference type="DIP" id="DIP-28126N"/>
<dbReference type="GO" id="GO:0003677">
    <property type="term" value="F:DNA binding"/>
    <property type="evidence" value="ECO:0007669"/>
    <property type="project" value="UniProtKB-KW"/>
</dbReference>
<dbReference type="GO" id="GO:0004803">
    <property type="term" value="F:transposase activity"/>
    <property type="evidence" value="ECO:0007669"/>
    <property type="project" value="InterPro"/>
</dbReference>
<dbReference type="GO" id="GO:0006313">
    <property type="term" value="P:DNA transposition"/>
    <property type="evidence" value="ECO:0007669"/>
    <property type="project" value="InterPro"/>
</dbReference>
<dbReference type="InterPro" id="IPR025296">
    <property type="entry name" value="DUF4158"/>
</dbReference>
<dbReference type="InterPro" id="IPR047653">
    <property type="entry name" value="Tn3-like_transpos"/>
</dbReference>
<dbReference type="InterPro" id="IPR002513">
    <property type="entry name" value="Tn3_Tnp_DDE_dom"/>
</dbReference>
<dbReference type="NCBIfam" id="NF033527">
    <property type="entry name" value="transpos_Tn3"/>
    <property type="match status" value="1"/>
</dbReference>
<dbReference type="Pfam" id="PF01526">
    <property type="entry name" value="DDE_Tnp_Tn3"/>
    <property type="match status" value="1"/>
</dbReference>
<dbReference type="Pfam" id="PF13700">
    <property type="entry name" value="DUF4158"/>
    <property type="match status" value="1"/>
</dbReference>
<keyword id="KW-0233">DNA recombination</keyword>
<keyword id="KW-0238">DNA-binding</keyword>
<keyword id="KW-0814">Transposable element</keyword>
<keyword id="KW-0815">Transposition</keyword>
<proteinExistence type="inferred from homology"/>
<accession>P08504</accession>